<keyword id="KW-0025">Alternative splicing</keyword>
<keyword id="KW-1048">Host nucleus</keyword>
<keyword id="KW-0472">Membrane</keyword>
<keyword id="KW-0694">RNA-binding</keyword>
<keyword id="KW-0468">Viral matrix protein</keyword>
<keyword id="KW-0946">Virion</keyword>
<organismHost>
    <name type="scientific">Aves</name>
    <dbReference type="NCBI Taxonomy" id="8782"/>
</organismHost>
<organismHost>
    <name type="scientific">Felis catus</name>
    <name type="common">Cat</name>
    <name type="synonym">Felis silvestris catus</name>
    <dbReference type="NCBI Taxonomy" id="9685"/>
</organismHost>
<organismHost>
    <name type="scientific">Homo sapiens</name>
    <name type="common">Human</name>
    <dbReference type="NCBI Taxonomy" id="9606"/>
</organismHost>
<organismHost>
    <name type="scientific">Panthera pardus</name>
    <name type="common">Leopard</name>
    <name type="synonym">Felis pardus</name>
    <dbReference type="NCBI Taxonomy" id="9691"/>
</organismHost>
<organismHost>
    <name type="scientific">Panthera tigris</name>
    <name type="common">Tiger</name>
    <dbReference type="NCBI Taxonomy" id="9694"/>
</organismHost>
<organismHost>
    <name type="scientific">Sus scrofa</name>
    <name type="common">Pig</name>
    <dbReference type="NCBI Taxonomy" id="9823"/>
</organismHost>
<reference key="1">
    <citation type="journal article" date="2002" name="Proc. Natl. Acad. Sci. U.S.A.">
        <title>Emergence of multiple genotypes of H5N1 avian influenza viruses in Hong Kong SAR.</title>
        <authorList>
            <person name="Guan Y."/>
            <person name="Peiris J.S.M."/>
            <person name="Lipatov A.S."/>
            <person name="Ellis T.M."/>
            <person name="Dyrting K.C."/>
            <person name="Krauss S."/>
            <person name="Zhang L.J."/>
            <person name="Webster R.G."/>
            <person name="Shortridge K.F."/>
        </authorList>
    </citation>
    <scope>NUCLEOTIDE SEQUENCE [GENOMIC RNA]</scope>
</reference>
<accession>Q809Z8</accession>
<organism>
    <name type="scientific">Influenza A virus (strain A/Chicken/Hong Kong/715.5/2001 H5N1 genotype E)</name>
    <dbReference type="NCBI Taxonomy" id="196434"/>
    <lineage>
        <taxon>Viruses</taxon>
        <taxon>Riboviria</taxon>
        <taxon>Orthornavirae</taxon>
        <taxon>Negarnaviricota</taxon>
        <taxon>Polyploviricotina</taxon>
        <taxon>Insthoviricetes</taxon>
        <taxon>Articulavirales</taxon>
        <taxon>Orthomyxoviridae</taxon>
        <taxon>Alphainfluenzavirus</taxon>
        <taxon>Alphainfluenzavirus influenzae</taxon>
        <taxon>Influenza A virus</taxon>
    </lineage>
</organism>
<proteinExistence type="inferred from homology"/>
<name>M1_I01A3</name>
<gene>
    <name evidence="1" type="primary">M</name>
</gene>
<protein>
    <recommendedName>
        <fullName evidence="1">Matrix protein 1</fullName>
        <shortName evidence="1">M1</shortName>
    </recommendedName>
</protein>
<sequence length="252" mass="27907">MSLLTEVETYVLSIIPSGPLKAEIAQRLEDVFAGKNTDLEALMEWLKTRPILSPLTKGILGFVFTLTVPSERGLQRRRFVQNALNGNGDPNNMDRAVKLYKKLKREITFHGAKEVALSYSTGALASCMGLIYNRMGTVTTEGAFGLVCATCEQIADSQHRSHRQMATTTNPLIRHENRMVLASTTAKAMEQMAGSSEQAAEAMEVANQARQMVQAMRTIGTHPNSSAGLRDNLLENLQAYQKRMGVQMQRFK</sequence>
<comment type="function">
    <text evidence="1">Plays critical roles in virus replication, from virus entry and uncoating to assembly and budding of the virus particle. M1 binding to ribonucleocapsids (RNPs) in nucleus seems to inhibit viral transcription. Interaction of viral NEP with M1-RNP is thought to promote nuclear export of the complex, which is targeted to the virion assembly site at the apical plasma membrane in polarized epithelial cells. Interactions with NA and HA may bring M1, a non-raft-associated protein, into lipid rafts. Forms a continuous shell on the inner side of the lipid bilayer in virion, where it binds the RNP. During virus entry into cell, the M2 ion channel acidifies the internal virion core, inducing M1 dissociation from the RNP. M1-free RNPs are transported to the nucleus, where viral transcription and replication can take place.</text>
</comment>
<comment type="function">
    <text evidence="1">Determines the virion's shape: spherical or filamentous. Clinical isolates of influenza are characterized by the presence of significant proportion of filamentous virions, whereas after multiple passage on eggs or cell culture, virions have only spherical morphology. Filamentous virions are thought to be important to infect neighboring cells, and spherical virions more suited to spread through aerosol between hosts organisms.</text>
</comment>
<comment type="subunit">
    <text evidence="1">Homodimer and homomultimer. Interacts with NEP. Binds ribonucleocapsid by both interacting with genomic RNA and NP protein. May interact with HA and NA. Cannot bind NP without genomic RNA.</text>
</comment>
<comment type="subcellular location">
    <subcellularLocation>
        <location evidence="1">Virion membrane</location>
        <topology evidence="1">Peripheral membrane protein</topology>
        <orientation evidence="1">Cytoplasmic side</orientation>
    </subcellularLocation>
    <subcellularLocation>
        <location evidence="1">Host nucleus</location>
    </subcellularLocation>
</comment>
<comment type="alternative products">
    <event type="alternative splicing"/>
    <isoform>
        <id>Q809Z8-1</id>
        <name>M1</name>
        <sequence type="displayed"/>
    </isoform>
    <isoform>
        <id>P0C5T3-1</id>
        <name>M2</name>
        <sequence type="external"/>
    </isoform>
    <text>Only the first 9 residues are shared by the 2 isoforms.</text>
</comment>
<comment type="miscellaneous">
    <text evidence="1">Most abundant protein in virion. When expressed alone can form virus-like particles in transfected cells.</text>
</comment>
<comment type="similarity">
    <text evidence="1">Belongs to the influenza viruses Matrix protein M1 family.</text>
</comment>
<feature type="chain" id="PRO_0000311610" description="Matrix protein 1">
    <location>
        <begin position="1"/>
        <end position="252"/>
    </location>
</feature>
<feature type="region of interest" description="Membrane-binding" evidence="1">
    <location>
        <begin position="1"/>
        <end position="164"/>
    </location>
</feature>
<feature type="region of interest" description="RNP-binding" evidence="1">
    <location>
        <begin position="165"/>
        <end position="252"/>
    </location>
</feature>
<feature type="short sequence motif" description="Nuclear localization signal" evidence="1">
    <location>
        <begin position="101"/>
        <end position="105"/>
    </location>
</feature>
<dbReference type="EMBL" id="AF509049">
    <property type="protein sequence ID" value="AAO52892.1"/>
    <property type="molecule type" value="Genomic_DNA"/>
</dbReference>
<dbReference type="SMR" id="Q809Z8"/>
<dbReference type="GO" id="GO:0042025">
    <property type="term" value="C:host cell nucleus"/>
    <property type="evidence" value="ECO:0007669"/>
    <property type="project" value="UniProtKB-SubCell"/>
</dbReference>
<dbReference type="GO" id="GO:0016020">
    <property type="term" value="C:membrane"/>
    <property type="evidence" value="ECO:0007669"/>
    <property type="project" value="UniProtKB-KW"/>
</dbReference>
<dbReference type="GO" id="GO:0055036">
    <property type="term" value="C:virion membrane"/>
    <property type="evidence" value="ECO:0007669"/>
    <property type="project" value="UniProtKB-SubCell"/>
</dbReference>
<dbReference type="GO" id="GO:0003723">
    <property type="term" value="F:RNA binding"/>
    <property type="evidence" value="ECO:0007669"/>
    <property type="project" value="UniProtKB-UniRule"/>
</dbReference>
<dbReference type="GO" id="GO:0039660">
    <property type="term" value="F:structural constituent of virion"/>
    <property type="evidence" value="ECO:0007669"/>
    <property type="project" value="UniProtKB-UniRule"/>
</dbReference>
<dbReference type="GO" id="GO:0046761">
    <property type="term" value="P:viral budding from plasma membrane"/>
    <property type="evidence" value="ECO:0007669"/>
    <property type="project" value="UniProtKB-UniRule"/>
</dbReference>
<dbReference type="FunFam" id="1.10.10.180:FF:000001">
    <property type="entry name" value="Matrix protein 1"/>
    <property type="match status" value="1"/>
</dbReference>
<dbReference type="FunFam" id="1.20.91.10:FF:000001">
    <property type="entry name" value="Matrix protein 1"/>
    <property type="match status" value="1"/>
</dbReference>
<dbReference type="Gene3D" id="1.10.10.180">
    <property type="match status" value="1"/>
</dbReference>
<dbReference type="Gene3D" id="1.20.91.10">
    <property type="match status" value="1"/>
</dbReference>
<dbReference type="HAMAP" id="MF_04068">
    <property type="entry name" value="INFV_M1"/>
    <property type="match status" value="1"/>
</dbReference>
<dbReference type="InterPro" id="IPR036039">
    <property type="entry name" value="Flu_matrix_M1"/>
</dbReference>
<dbReference type="InterPro" id="IPR013188">
    <property type="entry name" value="Flu_matrix_M1_C"/>
</dbReference>
<dbReference type="InterPro" id="IPR001561">
    <property type="entry name" value="Flu_matrix_M1_N"/>
</dbReference>
<dbReference type="InterPro" id="IPR015423">
    <property type="entry name" value="Flu_matrix_M1_N_sub1"/>
</dbReference>
<dbReference type="InterPro" id="IPR015799">
    <property type="entry name" value="Flu_matrix_M1_N_sub2"/>
</dbReference>
<dbReference type="InterPro" id="IPR037533">
    <property type="entry name" value="INFV_M1"/>
</dbReference>
<dbReference type="Pfam" id="PF00598">
    <property type="entry name" value="Flu_M1"/>
    <property type="match status" value="1"/>
</dbReference>
<dbReference type="Pfam" id="PF08289">
    <property type="entry name" value="Flu_M1_C"/>
    <property type="match status" value="1"/>
</dbReference>
<dbReference type="SMART" id="SM00759">
    <property type="entry name" value="Flu_M1_C"/>
    <property type="match status" value="1"/>
</dbReference>
<dbReference type="SUPFAM" id="SSF48145">
    <property type="entry name" value="Influenza virus matrix protein M1"/>
    <property type="match status" value="1"/>
</dbReference>
<evidence type="ECO:0000255" key="1">
    <source>
        <dbReference type="HAMAP-Rule" id="MF_04068"/>
    </source>
</evidence>